<organism>
    <name type="scientific">Oryza sativa subsp. japonica</name>
    <name type="common">Rice</name>
    <dbReference type="NCBI Taxonomy" id="39947"/>
    <lineage>
        <taxon>Eukaryota</taxon>
        <taxon>Viridiplantae</taxon>
        <taxon>Streptophyta</taxon>
        <taxon>Embryophyta</taxon>
        <taxon>Tracheophyta</taxon>
        <taxon>Spermatophyta</taxon>
        <taxon>Magnoliopsida</taxon>
        <taxon>Liliopsida</taxon>
        <taxon>Poales</taxon>
        <taxon>Poaceae</taxon>
        <taxon>BOP clade</taxon>
        <taxon>Oryzoideae</taxon>
        <taxon>Oryzeae</taxon>
        <taxon>Oryzinae</taxon>
        <taxon>Oryza</taxon>
        <taxon>Oryza sativa</taxon>
    </lineage>
</organism>
<proteinExistence type="evidence at protein level"/>
<sequence length="263" mass="29271">MLELRLVQGSLLKKVLEAIRELVTDANFDCSGTGFSLQAMDSSHVALVALLLRSEGFEHYRCDRNLSMGMNLNNMAKMLRCAGNDDIITIKADDGSDTVTFMFESPNQDKIADFEMKLMDIDSEHLGIPDSEYQAIVRMPSSEFSRICKDLSSIGDTVIISVTKEGVKFSTAGDIGTANIVCRQNKTVDKPEDATIIEMQEPVSLTFALRYMNSFTKASPLSEQVTISLSSELPVVVEYKIAEMGYIRFYLAPKIEEDEEMKS</sequence>
<dbReference type="EMBL" id="X54046">
    <property type="protein sequence ID" value="CAA37979.1"/>
    <property type="molecule type" value="Genomic_DNA"/>
</dbReference>
<dbReference type="EMBL" id="AC069158">
    <property type="protein sequence ID" value="AAK98707.1"/>
    <property type="molecule type" value="Genomic_DNA"/>
</dbReference>
<dbReference type="EMBL" id="AP004240">
    <property type="protein sequence ID" value="BAD19422.1"/>
    <property type="molecule type" value="Genomic_DNA"/>
</dbReference>
<dbReference type="EMBL" id="AP008208">
    <property type="protein sequence ID" value="BAF10352.1"/>
    <property type="molecule type" value="Genomic_DNA"/>
</dbReference>
<dbReference type="EMBL" id="AP014958">
    <property type="protein sequence ID" value="BAS81457.1"/>
    <property type="molecule type" value="Genomic_DNA"/>
</dbReference>
<dbReference type="EMBL" id="CM000139">
    <property type="protein sequence ID" value="EAZ24997.1"/>
    <property type="molecule type" value="Genomic_DNA"/>
</dbReference>
<dbReference type="EMBL" id="AK071591">
    <property type="protein sequence ID" value="BAG92571.1"/>
    <property type="molecule type" value="mRNA"/>
</dbReference>
<dbReference type="EMBL" id="AK243048">
    <property type="protein sequence ID" value="BAH01423.1"/>
    <property type="molecule type" value="mRNA"/>
</dbReference>
<dbReference type="EMBL" id="J04538">
    <property type="protein sequence ID" value="AAA33913.1"/>
    <property type="status" value="ALT_SEQ"/>
    <property type="molecule type" value="Genomic_DNA"/>
</dbReference>
<dbReference type="PIR" id="S14415">
    <property type="entry name" value="S14415"/>
</dbReference>
<dbReference type="RefSeq" id="XP_015627245.1">
    <property type="nucleotide sequence ID" value="XM_015771759.1"/>
</dbReference>
<dbReference type="SMR" id="P17070"/>
<dbReference type="FunCoup" id="P17070">
    <property type="interactions" value="2803"/>
</dbReference>
<dbReference type="IntAct" id="P17070">
    <property type="interactions" value="2"/>
</dbReference>
<dbReference type="STRING" id="39947.P17070"/>
<dbReference type="PaxDb" id="39947-P17070"/>
<dbReference type="EnsemblPlants" id="Os02t0805200-01">
    <property type="protein sequence ID" value="Os02t0805200-01"/>
    <property type="gene ID" value="Os02g0805200"/>
</dbReference>
<dbReference type="Gramene" id="Os02t0805200-01">
    <property type="protein sequence ID" value="Os02t0805200-01"/>
    <property type="gene ID" value="Os02g0805200"/>
</dbReference>
<dbReference type="KEGG" id="dosa:Os02g0805200"/>
<dbReference type="eggNOG" id="KOG1636">
    <property type="taxonomic scope" value="Eukaryota"/>
</dbReference>
<dbReference type="HOGENOM" id="CLU_043978_3_0_1"/>
<dbReference type="InParanoid" id="P17070"/>
<dbReference type="OMA" id="EMKLINM"/>
<dbReference type="OrthoDB" id="534348at2759"/>
<dbReference type="PlantReactome" id="R-OSA-9675782">
    <property type="pathway name" value="Maturation"/>
</dbReference>
<dbReference type="PlantReactome" id="R-OSA-9675815">
    <property type="pathway name" value="Leading strand synthesis"/>
</dbReference>
<dbReference type="PlantReactome" id="R-OSA-9675885">
    <property type="pathway name" value="Lagging strand synthesis"/>
</dbReference>
<dbReference type="Proteomes" id="UP000000763">
    <property type="component" value="Chromosome 2"/>
</dbReference>
<dbReference type="Proteomes" id="UP000007752">
    <property type="component" value="Chromosome 2"/>
</dbReference>
<dbReference type="Proteomes" id="UP000059680">
    <property type="component" value="Chromosome 2"/>
</dbReference>
<dbReference type="GO" id="GO:0005634">
    <property type="term" value="C:nucleus"/>
    <property type="evidence" value="ECO:0000314"/>
    <property type="project" value="UniProtKB"/>
</dbReference>
<dbReference type="GO" id="GO:0043626">
    <property type="term" value="C:PCNA complex"/>
    <property type="evidence" value="ECO:0000250"/>
    <property type="project" value="UniProtKB"/>
</dbReference>
<dbReference type="GO" id="GO:0003682">
    <property type="term" value="F:chromatin binding"/>
    <property type="evidence" value="ECO:0000250"/>
    <property type="project" value="UniProtKB"/>
</dbReference>
<dbReference type="GO" id="GO:0003684">
    <property type="term" value="F:damaged DNA binding"/>
    <property type="evidence" value="ECO:0000250"/>
    <property type="project" value="UniProtKB"/>
</dbReference>
<dbReference type="GO" id="GO:0030337">
    <property type="term" value="F:DNA polymerase processivity factor activity"/>
    <property type="evidence" value="ECO:0000318"/>
    <property type="project" value="GO_Central"/>
</dbReference>
<dbReference type="GO" id="GO:0034644">
    <property type="term" value="P:cellular response to UV"/>
    <property type="evidence" value="ECO:0000250"/>
    <property type="project" value="UniProtKB"/>
</dbReference>
<dbReference type="GO" id="GO:0006272">
    <property type="term" value="P:leading strand elongation"/>
    <property type="evidence" value="ECO:0000318"/>
    <property type="project" value="GO_Central"/>
</dbReference>
<dbReference type="GO" id="GO:0006298">
    <property type="term" value="P:mismatch repair"/>
    <property type="evidence" value="ECO:0000318"/>
    <property type="project" value="GO_Central"/>
</dbReference>
<dbReference type="GO" id="GO:0045739">
    <property type="term" value="P:positive regulation of DNA repair"/>
    <property type="evidence" value="ECO:0000250"/>
    <property type="project" value="UniProtKB"/>
</dbReference>
<dbReference type="GO" id="GO:0045740">
    <property type="term" value="P:positive regulation of DNA replication"/>
    <property type="evidence" value="ECO:0000250"/>
    <property type="project" value="UniProtKB"/>
</dbReference>
<dbReference type="GO" id="GO:0070207">
    <property type="term" value="P:protein homotrimerization"/>
    <property type="evidence" value="ECO:0000353"/>
    <property type="project" value="UniProtKB"/>
</dbReference>
<dbReference type="GO" id="GO:0019985">
    <property type="term" value="P:translesion synthesis"/>
    <property type="evidence" value="ECO:0000318"/>
    <property type="project" value="GO_Central"/>
</dbReference>
<dbReference type="CDD" id="cd00577">
    <property type="entry name" value="PCNA"/>
    <property type="match status" value="1"/>
</dbReference>
<dbReference type="FunFam" id="3.10.150.10:FF:000006">
    <property type="entry name" value="Proliferating cell nuclear antigen"/>
    <property type="match status" value="1"/>
</dbReference>
<dbReference type="FunFam" id="3.10.150.10:FF:000008">
    <property type="entry name" value="Proliferating cell nuclear antigen"/>
    <property type="match status" value="1"/>
</dbReference>
<dbReference type="FunFam" id="3.70.10.10:FF:000001">
    <property type="entry name" value="Proliferating cell nuclear antigen"/>
    <property type="match status" value="1"/>
</dbReference>
<dbReference type="Gene3D" id="3.70.10.10">
    <property type="match status" value="1"/>
</dbReference>
<dbReference type="HAMAP" id="MF_00317">
    <property type="entry name" value="DNApol_clamp_arch"/>
    <property type="match status" value="1"/>
</dbReference>
<dbReference type="InterPro" id="IPR046938">
    <property type="entry name" value="DNA_clamp_sf"/>
</dbReference>
<dbReference type="InterPro" id="IPR000730">
    <property type="entry name" value="Pr_cel_nuc_antig"/>
</dbReference>
<dbReference type="InterPro" id="IPR022649">
    <property type="entry name" value="Pr_cel_nuc_antig_C"/>
</dbReference>
<dbReference type="InterPro" id="IPR022659">
    <property type="entry name" value="Pr_cel_nuc_antig_CS"/>
</dbReference>
<dbReference type="InterPro" id="IPR022648">
    <property type="entry name" value="Pr_cel_nuc_antig_N"/>
</dbReference>
<dbReference type="NCBIfam" id="TIGR00590">
    <property type="entry name" value="pcna"/>
    <property type="match status" value="1"/>
</dbReference>
<dbReference type="PANTHER" id="PTHR11352">
    <property type="entry name" value="PROLIFERATING CELL NUCLEAR ANTIGEN"/>
    <property type="match status" value="1"/>
</dbReference>
<dbReference type="PANTHER" id="PTHR11352:SF0">
    <property type="entry name" value="PROLIFERATING CELL NUCLEAR ANTIGEN"/>
    <property type="match status" value="1"/>
</dbReference>
<dbReference type="Pfam" id="PF02747">
    <property type="entry name" value="PCNA_C"/>
    <property type="match status" value="1"/>
</dbReference>
<dbReference type="Pfam" id="PF00705">
    <property type="entry name" value="PCNA_N"/>
    <property type="match status" value="1"/>
</dbReference>
<dbReference type="PRINTS" id="PR00339">
    <property type="entry name" value="PCNACYCLIN"/>
</dbReference>
<dbReference type="SUPFAM" id="SSF55979">
    <property type="entry name" value="DNA clamp"/>
    <property type="match status" value="2"/>
</dbReference>
<dbReference type="PROSITE" id="PS01251">
    <property type="entry name" value="PCNA_1"/>
    <property type="match status" value="1"/>
</dbReference>
<dbReference type="PROSITE" id="PS00293">
    <property type="entry name" value="PCNA_2"/>
    <property type="match status" value="1"/>
</dbReference>
<evidence type="ECO:0000255" key="1"/>
<evidence type="ECO:0000269" key="2">
    <source>
    </source>
</evidence>
<evidence type="ECO:0000269" key="3">
    <source>
    </source>
</evidence>
<evidence type="ECO:0000269" key="4">
    <source>
    </source>
</evidence>
<evidence type="ECO:0000269" key="5">
    <source>
    </source>
</evidence>
<evidence type="ECO:0000269" key="6">
    <source>
    </source>
</evidence>
<evidence type="ECO:0000269" key="7">
    <source>
    </source>
</evidence>
<evidence type="ECO:0000269" key="8">
    <source>
    </source>
</evidence>
<evidence type="ECO:0000303" key="9">
    <source>
    </source>
</evidence>
<evidence type="ECO:0000305" key="10"/>
<evidence type="ECO:0000312" key="11">
    <source>
        <dbReference type="EMBL" id="EAZ24997.1"/>
    </source>
</evidence>
<gene>
    <name type="ordered locus">Os02g0805200</name>
    <name type="ordered locus">LOC_Os02g56130</name>
    <name type="ORF">OJ1548_F12.18</name>
    <name evidence="11" type="ORF">OsJ_08777</name>
    <name type="ORF">OSJNBa0049O12.19</name>
</gene>
<keyword id="KW-0235">DNA replication</keyword>
<keyword id="KW-0238">DNA-binding</keyword>
<keyword id="KW-0539">Nucleus</keyword>
<keyword id="KW-1185">Reference proteome</keyword>
<feature type="chain" id="PRO_0000149184" description="Proliferating cell nuclear antigen">
    <location>
        <begin position="1"/>
        <end position="263"/>
    </location>
</feature>
<feature type="DNA-binding region" evidence="1">
    <location>
        <begin position="61"/>
        <end position="80"/>
    </location>
</feature>
<feature type="sequence conflict" description="In Ref. 8; AAA33913." evidence="10" ref="8">
    <original>FS</original>
    <variation>KT</variation>
    <location>
        <begin position="144"/>
        <end position="145"/>
    </location>
</feature>
<accession>P17070</accession>
<accession>Q0DWN6</accession>
<accession>Q6K845</accession>
<accession>Q7G870</accession>
<reference key="1">
    <citation type="journal article" date="1991" name="Eur. J. Biochem.">
        <title>Highly conserved structure of proliferating cell nuclear antigen (DNA polymerase delta auxiliary protein) gene in plants.</title>
        <authorList>
            <person name="Suzuka I."/>
            <person name="Hata S."/>
            <person name="Matsuoka M."/>
            <person name="Kosugi S."/>
            <person name="Hashimoto J."/>
        </authorList>
    </citation>
    <scope>NUCLEOTIDE SEQUENCE [GENOMIC DNA]</scope>
</reference>
<reference key="2">
    <citation type="journal article" date="2005" name="Nature">
        <title>The map-based sequence of the rice genome.</title>
        <authorList>
            <consortium name="International rice genome sequencing project (IRGSP)"/>
        </authorList>
    </citation>
    <scope>NUCLEOTIDE SEQUENCE [LARGE SCALE GENOMIC DNA]</scope>
    <source>
        <strain>cv. Nipponbare</strain>
    </source>
</reference>
<reference key="3">
    <citation type="journal article" date="2008" name="Nucleic Acids Res.">
        <title>The rice annotation project database (RAP-DB): 2008 update.</title>
        <authorList>
            <consortium name="The rice annotation project (RAP)"/>
        </authorList>
    </citation>
    <scope>GENOME REANNOTATION</scope>
    <source>
        <strain>cv. Nipponbare</strain>
    </source>
</reference>
<reference key="4">
    <citation type="journal article" date="2013" name="Rice">
        <title>Improvement of the Oryza sativa Nipponbare reference genome using next generation sequence and optical map data.</title>
        <authorList>
            <person name="Kawahara Y."/>
            <person name="de la Bastide M."/>
            <person name="Hamilton J.P."/>
            <person name="Kanamori H."/>
            <person name="McCombie W.R."/>
            <person name="Ouyang S."/>
            <person name="Schwartz D.C."/>
            <person name="Tanaka T."/>
            <person name="Wu J."/>
            <person name="Zhou S."/>
            <person name="Childs K.L."/>
            <person name="Davidson R.M."/>
            <person name="Lin H."/>
            <person name="Quesada-Ocampo L."/>
            <person name="Vaillancourt B."/>
            <person name="Sakai H."/>
            <person name="Lee S.S."/>
            <person name="Kim J."/>
            <person name="Numa H."/>
            <person name="Itoh T."/>
            <person name="Buell C.R."/>
            <person name="Matsumoto T."/>
        </authorList>
    </citation>
    <scope>GENOME REANNOTATION</scope>
    <source>
        <strain>cv. Nipponbare</strain>
    </source>
</reference>
<reference key="5">
    <citation type="journal article" date="2005" name="PLoS Biol.">
        <title>The genomes of Oryza sativa: a history of duplications.</title>
        <authorList>
            <person name="Yu J."/>
            <person name="Wang J."/>
            <person name="Lin W."/>
            <person name="Li S."/>
            <person name="Li H."/>
            <person name="Zhou J."/>
            <person name="Ni P."/>
            <person name="Dong W."/>
            <person name="Hu S."/>
            <person name="Zeng C."/>
            <person name="Zhang J."/>
            <person name="Zhang Y."/>
            <person name="Li R."/>
            <person name="Xu Z."/>
            <person name="Li S."/>
            <person name="Li X."/>
            <person name="Zheng H."/>
            <person name="Cong L."/>
            <person name="Lin L."/>
            <person name="Yin J."/>
            <person name="Geng J."/>
            <person name="Li G."/>
            <person name="Shi J."/>
            <person name="Liu J."/>
            <person name="Lv H."/>
            <person name="Li J."/>
            <person name="Wang J."/>
            <person name="Deng Y."/>
            <person name="Ran L."/>
            <person name="Shi X."/>
            <person name="Wang X."/>
            <person name="Wu Q."/>
            <person name="Li C."/>
            <person name="Ren X."/>
            <person name="Wang J."/>
            <person name="Wang X."/>
            <person name="Li D."/>
            <person name="Liu D."/>
            <person name="Zhang X."/>
            <person name="Ji Z."/>
            <person name="Zhao W."/>
            <person name="Sun Y."/>
            <person name="Zhang Z."/>
            <person name="Bao J."/>
            <person name="Han Y."/>
            <person name="Dong L."/>
            <person name="Ji J."/>
            <person name="Chen P."/>
            <person name="Wu S."/>
            <person name="Liu J."/>
            <person name="Xiao Y."/>
            <person name="Bu D."/>
            <person name="Tan J."/>
            <person name="Yang L."/>
            <person name="Ye C."/>
            <person name="Zhang J."/>
            <person name="Xu J."/>
            <person name="Zhou Y."/>
            <person name="Yu Y."/>
            <person name="Zhang B."/>
            <person name="Zhuang S."/>
            <person name="Wei H."/>
            <person name="Liu B."/>
            <person name="Lei M."/>
            <person name="Yu H."/>
            <person name="Li Y."/>
            <person name="Xu H."/>
            <person name="Wei S."/>
            <person name="He X."/>
            <person name="Fang L."/>
            <person name="Zhang Z."/>
            <person name="Zhang Y."/>
            <person name="Huang X."/>
            <person name="Su Z."/>
            <person name="Tong W."/>
            <person name="Li J."/>
            <person name="Tong Z."/>
            <person name="Li S."/>
            <person name="Ye J."/>
            <person name="Wang L."/>
            <person name="Fang L."/>
            <person name="Lei T."/>
            <person name="Chen C.-S."/>
            <person name="Chen H.-C."/>
            <person name="Xu Z."/>
            <person name="Li H."/>
            <person name="Huang H."/>
            <person name="Zhang F."/>
            <person name="Xu H."/>
            <person name="Li N."/>
            <person name="Zhao C."/>
            <person name="Li S."/>
            <person name="Dong L."/>
            <person name="Huang Y."/>
            <person name="Li L."/>
            <person name="Xi Y."/>
            <person name="Qi Q."/>
            <person name="Li W."/>
            <person name="Zhang B."/>
            <person name="Hu W."/>
            <person name="Zhang Y."/>
            <person name="Tian X."/>
            <person name="Jiao Y."/>
            <person name="Liang X."/>
            <person name="Jin J."/>
            <person name="Gao L."/>
            <person name="Zheng W."/>
            <person name="Hao B."/>
            <person name="Liu S.-M."/>
            <person name="Wang W."/>
            <person name="Yuan L."/>
            <person name="Cao M."/>
            <person name="McDermott J."/>
            <person name="Samudrala R."/>
            <person name="Wang J."/>
            <person name="Wong G.K.-S."/>
            <person name="Yang H."/>
        </authorList>
    </citation>
    <scope>NUCLEOTIDE SEQUENCE [LARGE SCALE GENOMIC DNA]</scope>
    <source>
        <strain>cv. Nipponbare</strain>
    </source>
</reference>
<reference key="6">
    <citation type="journal article" date="2003" name="Science">
        <title>Collection, mapping, and annotation of over 28,000 cDNA clones from japonica rice.</title>
        <authorList>
            <consortium name="The rice full-length cDNA consortium"/>
        </authorList>
    </citation>
    <scope>NUCLEOTIDE SEQUENCE [LARGE SCALE MRNA]</scope>
    <source>
        <strain>cv. Nipponbare</strain>
    </source>
</reference>
<reference key="7">
    <citation type="submission" date="2006-10" db="EMBL/GenBank/DDBJ databases">
        <title>Oryza sativa full length cDNA.</title>
        <authorList>
            <consortium name="The rice full-length cDNA consortium"/>
        </authorList>
    </citation>
    <scope>NUCLEOTIDE SEQUENCE [LARGE SCALE MRNA]</scope>
    <source>
        <strain>cv. Nipponbare</strain>
    </source>
</reference>
<reference key="8">
    <citation type="journal article" date="1989" name="Proc. Natl. Acad. Sci. U.S.A.">
        <title>Gene for proliferating-cell nuclear antigen (DNA polymerase delta auxiliary protein) is present in both mammalian and higher plant genomes.</title>
        <authorList>
            <person name="Suzuka I."/>
            <person name="Daidoji H."/>
            <person name="Matsuoka M."/>
            <person name="Kadowaki K."/>
            <person name="Takasaki Y."/>
            <person name="Nakane P.K."/>
            <person name="Moriuchi T."/>
        </authorList>
    </citation>
    <scope>NUCLEOTIDE SEQUENCE [GENOMIC DNA] OF 108-157</scope>
</reference>
<reference key="9">
    <citation type="journal article" date="2001" name="Plant J.">
        <title>Characterization of plant proliferating cell nuclear antigen (PCNA) and flap endonuclease-1 (FEN-1), and their distribution in mitotic and meiotic cell cycles.</title>
        <authorList>
            <person name="Kimura S."/>
            <person name="Suzuki T."/>
            <person name="Yanagawa Y."/>
            <person name="Yamamoto T."/>
            <person name="Nakagawa H."/>
            <person name="Tanaka I."/>
            <person name="Hashimoto J."/>
            <person name="Sakaguchi K."/>
        </authorList>
    </citation>
    <scope>SUBUNIT</scope>
    <scope>INTERACTION WITH FEN1A</scope>
    <scope>SUBCELLULAR LOCATION</scope>
    <scope>TISSUE SPECIFICITY</scope>
    <scope>INDUCTION</scope>
</reference>
<reference key="10">
    <citation type="journal article" date="2004" name="Eur. J. Biochem.">
        <title>Plant DNA polymerase lambda, a DNA repair enzyme that functions in plant meristematic and meiotic tissues.</title>
        <authorList>
            <person name="Uchiyama Y."/>
            <person name="Kimura S."/>
            <person name="Yamamoto T."/>
            <person name="Ishibashi T."/>
            <person name="Sakaguchi K."/>
        </authorList>
    </citation>
    <scope>INTERACTION WITH POLL</scope>
    <source>
        <strain>cv. Nipponbare</strain>
    </source>
</reference>
<reference key="11">
    <citation type="journal article" date="2004" name="Nucleic Acids Res.">
        <title>DNA repair in higher plants; photoreactivation is the major DNA repair pathway in non-proliferating cells while excision repair (nucleotide excision repair and base excision repair) is active in proliferating cells.</title>
        <authorList>
            <person name="Kimura S."/>
            <person name="Tahira Y."/>
            <person name="Ishibashi T."/>
            <person name="Mori Y."/>
            <person name="Mori T."/>
            <person name="Hashimoto J."/>
            <person name="Sakaguchi K."/>
        </authorList>
    </citation>
    <scope>TISSUE SPECIFICITY</scope>
</reference>
<reference key="12">
    <citation type="journal article" date="2005" name="J. Plant Res.">
        <title>Interaction between proliferating cell nuclear antigen (PCNA) and a DnaJ induced by DNA damage.</title>
        <authorList>
            <person name="Yamamoto T."/>
            <person name="Mori Y."/>
            <person name="Ishibashi T."/>
            <person name="Uchiyama Y."/>
            <person name="Ueda T."/>
            <person name="Ando T."/>
            <person name="Hashimoto J."/>
            <person name="Kimura S."/>
            <person name="Sakaguchi K."/>
        </authorList>
    </citation>
    <scope>INTERACTION WITH DJA7 AND DJA8</scope>
    <scope>INDUCTION</scope>
</reference>
<reference key="13">
    <citation type="journal article" date="2012" name="J. Biochem.">
        <title>The OsGEN-L protein from Oryza sativa possesses Holliday junction resolvase activity as well as 5'-flap endonuclease activity.</title>
        <authorList>
            <person name="Yang Y."/>
            <person name="Ishino S."/>
            <person name="Yamagami T."/>
            <person name="Kumamaru T."/>
            <person name="Satoh H."/>
            <person name="Ishino Y."/>
        </authorList>
    </citation>
    <scope>INTERACTION WITH RAD/GEN1</scope>
</reference>
<reference key="14">
    <citation type="journal article" date="2014" name="J. Hered.">
        <title>Unraveling low-level gamma radiation--responsive changes in expression of early and late genes in leaves of rice seedlings at Iitate Village, Fukushima.</title>
        <authorList>
            <person name="Hayashi G."/>
            <person name="Shibato J."/>
            <person name="Imanaka T."/>
            <person name="Cho K."/>
            <person name="Kubo A."/>
            <person name="Kikuchi S."/>
            <person name="Satoh K."/>
            <person name="Kimura S."/>
            <person name="Ozawa S."/>
            <person name="Fukutani S."/>
            <person name="Endo S."/>
            <person name="Ichikawa K."/>
            <person name="Agrawal G.K."/>
            <person name="Shioda S."/>
            <person name="Fukumoto M."/>
            <person name="Rakwal R."/>
        </authorList>
    </citation>
    <scope>INDUCTION BY GAMMA IRRADIATION</scope>
</reference>
<reference key="15">
    <citation type="journal article" date="2016" name="PLoS ONE">
        <title>Linear energy transfer-dependent change in rice gene expression profile after heavy-ion beam irradiation.</title>
        <authorList>
            <person name="Ishii K."/>
            <person name="Kazama Y."/>
            <person name="Morita R."/>
            <person name="Hirano T."/>
            <person name="Ikeda T."/>
            <person name="Usuda S."/>
            <person name="Hayashi Y."/>
            <person name="Ohbu S."/>
            <person name="Motoyama R."/>
            <person name="Nagamura Y."/>
            <person name="Abe T."/>
        </authorList>
    </citation>
    <scope>INDUCTION BY HEAVY ION IRRADIATION</scope>
</reference>
<comment type="function">
    <text>This protein is an auxiliary protein of DNA polymerase delta and is involved in the control of eukaryotic DNA replication by increasing the polymerase's processibility during elongation of the leading strand.</text>
</comment>
<comment type="subunit">
    <text evidence="2 4 5 6">Homotrimer. Interacts with FEN1A (PubMed:11851910). Interacts with POLL (PubMed:15206945). Interacts with RAD/GEN1 (PubMed:22247560). Interacts with DJA7 and DJA8 (PubMed:15806324).</text>
</comment>
<comment type="subcellular location">
    <subcellularLocation>
        <location evidence="2">Nucleus</location>
    </subcellularLocation>
</comment>
<comment type="tissue specificity">
    <text evidence="2 3">Expressed in proliferating tissues. Expressed in roots and root apex. Expressed at low levels in young leaves. Not detected in mature leaves (PubMed:11851910, PubMed:15150342). Highly expressed in shoot apical meristem (SAM). Expressed in flag leaves and panicles (PubMed:15150342).</text>
</comment>
<comment type="induction">
    <text evidence="2 5 7 8">Induced by the cell cycle inhibitors aphidicolin and hydroxyurea (PubMed:11851910). Induced by gamma irradiation (PubMed:25124817). Induced by heavy ion irradiation (PubMed:27462908). Induced by UV and hydrogen peroxide. Down-regulated during sucrose starvation (PubMed:15806324).</text>
</comment>
<comment type="similarity">
    <text evidence="10">Belongs to the PCNA family.</text>
</comment>
<comment type="sequence caution" evidence="10">
    <conflict type="erroneous gene model prediction">
        <sequence resource="EMBL-CDS" id="AAA33913"/>
    </conflict>
</comment>
<name>PCNA_ORYSJ</name>
<protein>
    <recommendedName>
        <fullName>Proliferating cell nuclear antigen</fullName>
        <shortName evidence="9">OsPCNA</shortName>
        <shortName>PCNA</shortName>
    </recommendedName>
    <alternativeName>
        <fullName>Cyclin</fullName>
    </alternativeName>
</protein>